<feature type="chain" id="PRO_1000013161" description="Acyl-[acyl-carrier-protein]--UDP-N-acetylglucosamine O-acyltransferase">
    <location>
        <begin position="1"/>
        <end position="262"/>
    </location>
</feature>
<accession>A4JF63</accession>
<sequence>MTRIHPTAIVEPGAQIDESVEIGPYAIVGPHVTIGARTTIGSHSVIEGHTTLGEDNRIGHYASVGGRPQDMKYKNEPTRLVIGNRNTIREFTTIHTGTVQDAGVTTLGDDNWIMAYVHIGHDCRVGNNVILSSNAQMAGHVEIGDFAIIGGMSGVHQFVRIGAHSMLGGASALVQDVPPFVIAAGNKAEPHGINVEGLRRRGFSPDAISALRSAYRLLYKNGLSLDEAKVQLRELASAGGDGDAPVAALVAFVDASQRGIIR</sequence>
<gene>
    <name evidence="1" type="primary">lpxA</name>
    <name type="ordered locus">Bcep1808_1913</name>
</gene>
<name>LPXA_BURVG</name>
<organism>
    <name type="scientific">Burkholderia vietnamiensis (strain G4 / LMG 22486)</name>
    <name type="common">Burkholderia cepacia (strain R1808)</name>
    <dbReference type="NCBI Taxonomy" id="269482"/>
    <lineage>
        <taxon>Bacteria</taxon>
        <taxon>Pseudomonadati</taxon>
        <taxon>Pseudomonadota</taxon>
        <taxon>Betaproteobacteria</taxon>
        <taxon>Burkholderiales</taxon>
        <taxon>Burkholderiaceae</taxon>
        <taxon>Burkholderia</taxon>
        <taxon>Burkholderia cepacia complex</taxon>
    </lineage>
</organism>
<reference key="1">
    <citation type="submission" date="2007-03" db="EMBL/GenBank/DDBJ databases">
        <title>Complete sequence of chromosome 1 of Burkholderia vietnamiensis G4.</title>
        <authorList>
            <consortium name="US DOE Joint Genome Institute"/>
            <person name="Copeland A."/>
            <person name="Lucas S."/>
            <person name="Lapidus A."/>
            <person name="Barry K."/>
            <person name="Detter J.C."/>
            <person name="Glavina del Rio T."/>
            <person name="Hammon N."/>
            <person name="Israni S."/>
            <person name="Dalin E."/>
            <person name="Tice H."/>
            <person name="Pitluck S."/>
            <person name="Chain P."/>
            <person name="Malfatti S."/>
            <person name="Shin M."/>
            <person name="Vergez L."/>
            <person name="Schmutz J."/>
            <person name="Larimer F."/>
            <person name="Land M."/>
            <person name="Hauser L."/>
            <person name="Kyrpides N."/>
            <person name="Tiedje J."/>
            <person name="Richardson P."/>
        </authorList>
    </citation>
    <scope>NUCLEOTIDE SEQUENCE [LARGE SCALE GENOMIC DNA]</scope>
    <source>
        <strain>G4 / LMG 22486</strain>
    </source>
</reference>
<keyword id="KW-0012">Acyltransferase</keyword>
<keyword id="KW-0963">Cytoplasm</keyword>
<keyword id="KW-0441">Lipid A biosynthesis</keyword>
<keyword id="KW-0444">Lipid biosynthesis</keyword>
<keyword id="KW-0443">Lipid metabolism</keyword>
<keyword id="KW-0677">Repeat</keyword>
<keyword id="KW-0808">Transferase</keyword>
<dbReference type="EC" id="2.3.1.129" evidence="1"/>
<dbReference type="EMBL" id="CP000614">
    <property type="protein sequence ID" value="ABO54916.1"/>
    <property type="molecule type" value="Genomic_DNA"/>
</dbReference>
<dbReference type="SMR" id="A4JF63"/>
<dbReference type="KEGG" id="bvi:Bcep1808_1913"/>
<dbReference type="eggNOG" id="COG1043">
    <property type="taxonomic scope" value="Bacteria"/>
</dbReference>
<dbReference type="HOGENOM" id="CLU_061249_0_0_4"/>
<dbReference type="UniPathway" id="UPA00359">
    <property type="reaction ID" value="UER00477"/>
</dbReference>
<dbReference type="Proteomes" id="UP000002287">
    <property type="component" value="Chromosome 1"/>
</dbReference>
<dbReference type="GO" id="GO:0005737">
    <property type="term" value="C:cytoplasm"/>
    <property type="evidence" value="ECO:0007669"/>
    <property type="project" value="UniProtKB-SubCell"/>
</dbReference>
<dbReference type="GO" id="GO:0016020">
    <property type="term" value="C:membrane"/>
    <property type="evidence" value="ECO:0007669"/>
    <property type="project" value="GOC"/>
</dbReference>
<dbReference type="GO" id="GO:0008780">
    <property type="term" value="F:acyl-[acyl-carrier-protein]-UDP-N-acetylglucosamine O-acyltransferase activity"/>
    <property type="evidence" value="ECO:0007669"/>
    <property type="project" value="UniProtKB-UniRule"/>
</dbReference>
<dbReference type="GO" id="GO:0009245">
    <property type="term" value="P:lipid A biosynthetic process"/>
    <property type="evidence" value="ECO:0007669"/>
    <property type="project" value="UniProtKB-UniRule"/>
</dbReference>
<dbReference type="CDD" id="cd03351">
    <property type="entry name" value="LbH_UDP-GlcNAc_AT"/>
    <property type="match status" value="1"/>
</dbReference>
<dbReference type="Gene3D" id="2.160.10.10">
    <property type="entry name" value="Hexapeptide repeat proteins"/>
    <property type="match status" value="1"/>
</dbReference>
<dbReference type="Gene3D" id="1.20.1180.10">
    <property type="entry name" value="Udp N-acetylglucosamine O-acyltransferase, C-terminal domain"/>
    <property type="match status" value="1"/>
</dbReference>
<dbReference type="HAMAP" id="MF_00387">
    <property type="entry name" value="LpxA"/>
    <property type="match status" value="1"/>
</dbReference>
<dbReference type="InterPro" id="IPR029098">
    <property type="entry name" value="Acetyltransf_C"/>
</dbReference>
<dbReference type="InterPro" id="IPR037157">
    <property type="entry name" value="Acetyltransf_C_sf"/>
</dbReference>
<dbReference type="InterPro" id="IPR001451">
    <property type="entry name" value="Hexapep"/>
</dbReference>
<dbReference type="InterPro" id="IPR010137">
    <property type="entry name" value="Lipid_A_LpxA"/>
</dbReference>
<dbReference type="InterPro" id="IPR011004">
    <property type="entry name" value="Trimer_LpxA-like_sf"/>
</dbReference>
<dbReference type="NCBIfam" id="TIGR01852">
    <property type="entry name" value="lipid_A_lpxA"/>
    <property type="match status" value="1"/>
</dbReference>
<dbReference type="NCBIfam" id="NF003657">
    <property type="entry name" value="PRK05289.1"/>
    <property type="match status" value="1"/>
</dbReference>
<dbReference type="PANTHER" id="PTHR43480">
    <property type="entry name" value="ACYL-[ACYL-CARRIER-PROTEIN]--UDP-N-ACETYLGLUCOSAMINE O-ACYLTRANSFERASE"/>
    <property type="match status" value="1"/>
</dbReference>
<dbReference type="PANTHER" id="PTHR43480:SF1">
    <property type="entry name" value="ACYL-[ACYL-CARRIER-PROTEIN]--UDP-N-ACETYLGLUCOSAMINE O-ACYLTRANSFERASE, MITOCHONDRIAL-RELATED"/>
    <property type="match status" value="1"/>
</dbReference>
<dbReference type="Pfam" id="PF13720">
    <property type="entry name" value="Acetyltransf_11"/>
    <property type="match status" value="1"/>
</dbReference>
<dbReference type="Pfam" id="PF00132">
    <property type="entry name" value="Hexapep"/>
    <property type="match status" value="2"/>
</dbReference>
<dbReference type="PIRSF" id="PIRSF000456">
    <property type="entry name" value="UDP-GlcNAc_acltr"/>
    <property type="match status" value="1"/>
</dbReference>
<dbReference type="SUPFAM" id="SSF51161">
    <property type="entry name" value="Trimeric LpxA-like enzymes"/>
    <property type="match status" value="1"/>
</dbReference>
<dbReference type="PROSITE" id="PS00101">
    <property type="entry name" value="HEXAPEP_TRANSFERASES"/>
    <property type="match status" value="1"/>
</dbReference>
<protein>
    <recommendedName>
        <fullName evidence="1">Acyl-[acyl-carrier-protein]--UDP-N-acetylglucosamine O-acyltransferase</fullName>
        <shortName evidence="1">UDP-N-acetylglucosamine acyltransferase</shortName>
        <ecNumber evidence="1">2.3.1.129</ecNumber>
    </recommendedName>
</protein>
<proteinExistence type="inferred from homology"/>
<evidence type="ECO:0000255" key="1">
    <source>
        <dbReference type="HAMAP-Rule" id="MF_00387"/>
    </source>
</evidence>
<comment type="function">
    <text evidence="1">Involved in the biosynthesis of lipid A, a phosphorylated glycolipid that anchors the lipopolysaccharide to the outer membrane of the cell.</text>
</comment>
<comment type="catalytic activity">
    <reaction evidence="1">
        <text>a (3R)-hydroxyacyl-[ACP] + UDP-N-acetyl-alpha-D-glucosamine = a UDP-3-O-[(3R)-3-hydroxyacyl]-N-acetyl-alpha-D-glucosamine + holo-[ACP]</text>
        <dbReference type="Rhea" id="RHEA:67812"/>
        <dbReference type="Rhea" id="RHEA-COMP:9685"/>
        <dbReference type="Rhea" id="RHEA-COMP:9945"/>
        <dbReference type="ChEBI" id="CHEBI:57705"/>
        <dbReference type="ChEBI" id="CHEBI:64479"/>
        <dbReference type="ChEBI" id="CHEBI:78827"/>
        <dbReference type="ChEBI" id="CHEBI:173225"/>
        <dbReference type="EC" id="2.3.1.129"/>
    </reaction>
</comment>
<comment type="pathway">
    <text evidence="1">Glycolipid biosynthesis; lipid IV(A) biosynthesis; lipid IV(A) from (3R)-3-hydroxytetradecanoyl-[acyl-carrier-protein] and UDP-N-acetyl-alpha-D-glucosamine: step 1/6.</text>
</comment>
<comment type="subunit">
    <text evidence="1">Homotrimer.</text>
</comment>
<comment type="subcellular location">
    <subcellularLocation>
        <location evidence="1">Cytoplasm</location>
    </subcellularLocation>
</comment>
<comment type="similarity">
    <text evidence="1">Belongs to the transferase hexapeptide repeat family. LpxA subfamily.</text>
</comment>